<protein>
    <recommendedName>
        <fullName evidence="1">Pyridoxal 5'-phosphate synthase subunit PdxT</fullName>
        <ecNumber evidence="1">4.3.3.6</ecNumber>
    </recommendedName>
    <alternativeName>
        <fullName evidence="1">Pdx2</fullName>
    </alternativeName>
    <alternativeName>
        <fullName evidence="1">Pyridoxal 5'-phosphate synthase glutaminase subunit</fullName>
        <ecNumber evidence="1">3.5.1.2</ecNumber>
    </alternativeName>
</protein>
<dbReference type="EC" id="4.3.3.6" evidence="1"/>
<dbReference type="EC" id="3.5.1.2" evidence="1"/>
<dbReference type="EMBL" id="AP011115">
    <property type="protein sequence ID" value="BAH55114.1"/>
    <property type="molecule type" value="Genomic_DNA"/>
</dbReference>
<dbReference type="RefSeq" id="WP_015890544.1">
    <property type="nucleotide sequence ID" value="NC_012522.1"/>
</dbReference>
<dbReference type="SMR" id="C1B4C5"/>
<dbReference type="STRING" id="632772.ROP_68670"/>
<dbReference type="MEROPS" id="C26.A32"/>
<dbReference type="KEGG" id="rop:ROP_68670"/>
<dbReference type="PATRIC" id="fig|632772.20.peg.7157"/>
<dbReference type="HOGENOM" id="CLU_069674_2_0_11"/>
<dbReference type="OrthoDB" id="9810320at2"/>
<dbReference type="UniPathway" id="UPA00245"/>
<dbReference type="Proteomes" id="UP000002212">
    <property type="component" value="Chromosome"/>
</dbReference>
<dbReference type="GO" id="GO:0005829">
    <property type="term" value="C:cytosol"/>
    <property type="evidence" value="ECO:0007669"/>
    <property type="project" value="TreeGrafter"/>
</dbReference>
<dbReference type="GO" id="GO:1903600">
    <property type="term" value="C:glutaminase complex"/>
    <property type="evidence" value="ECO:0007669"/>
    <property type="project" value="TreeGrafter"/>
</dbReference>
<dbReference type="GO" id="GO:0004359">
    <property type="term" value="F:glutaminase activity"/>
    <property type="evidence" value="ECO:0007669"/>
    <property type="project" value="UniProtKB-UniRule"/>
</dbReference>
<dbReference type="GO" id="GO:0036381">
    <property type="term" value="F:pyridoxal 5'-phosphate synthase (glutamine hydrolysing) activity"/>
    <property type="evidence" value="ECO:0007669"/>
    <property type="project" value="UniProtKB-UniRule"/>
</dbReference>
<dbReference type="GO" id="GO:0006543">
    <property type="term" value="P:glutamine catabolic process"/>
    <property type="evidence" value="ECO:0007669"/>
    <property type="project" value="UniProtKB-UniRule"/>
</dbReference>
<dbReference type="GO" id="GO:0042823">
    <property type="term" value="P:pyridoxal phosphate biosynthetic process"/>
    <property type="evidence" value="ECO:0007669"/>
    <property type="project" value="UniProtKB-UniRule"/>
</dbReference>
<dbReference type="GO" id="GO:0008614">
    <property type="term" value="P:pyridoxine metabolic process"/>
    <property type="evidence" value="ECO:0007669"/>
    <property type="project" value="TreeGrafter"/>
</dbReference>
<dbReference type="CDD" id="cd01749">
    <property type="entry name" value="GATase1_PB"/>
    <property type="match status" value="1"/>
</dbReference>
<dbReference type="FunFam" id="3.40.50.880:FF:000010">
    <property type="entry name" value="uncharacterized protein LOC100176842 isoform X2"/>
    <property type="match status" value="1"/>
</dbReference>
<dbReference type="Gene3D" id="3.40.50.880">
    <property type="match status" value="1"/>
</dbReference>
<dbReference type="HAMAP" id="MF_01615">
    <property type="entry name" value="PdxT"/>
    <property type="match status" value="1"/>
</dbReference>
<dbReference type="InterPro" id="IPR029062">
    <property type="entry name" value="Class_I_gatase-like"/>
</dbReference>
<dbReference type="InterPro" id="IPR002161">
    <property type="entry name" value="PdxT/SNO"/>
</dbReference>
<dbReference type="InterPro" id="IPR021196">
    <property type="entry name" value="PdxT/SNO_CS"/>
</dbReference>
<dbReference type="NCBIfam" id="TIGR03800">
    <property type="entry name" value="PLP_synth_Pdx2"/>
    <property type="match status" value="1"/>
</dbReference>
<dbReference type="PANTHER" id="PTHR31559">
    <property type="entry name" value="PYRIDOXAL 5'-PHOSPHATE SYNTHASE SUBUNIT SNO"/>
    <property type="match status" value="1"/>
</dbReference>
<dbReference type="PANTHER" id="PTHR31559:SF0">
    <property type="entry name" value="PYRIDOXAL 5'-PHOSPHATE SYNTHASE SUBUNIT SNO1-RELATED"/>
    <property type="match status" value="1"/>
</dbReference>
<dbReference type="Pfam" id="PF01174">
    <property type="entry name" value="SNO"/>
    <property type="match status" value="1"/>
</dbReference>
<dbReference type="PIRSF" id="PIRSF005639">
    <property type="entry name" value="Glut_amidoT_SNO"/>
    <property type="match status" value="1"/>
</dbReference>
<dbReference type="SUPFAM" id="SSF52317">
    <property type="entry name" value="Class I glutamine amidotransferase-like"/>
    <property type="match status" value="1"/>
</dbReference>
<dbReference type="PROSITE" id="PS01236">
    <property type="entry name" value="PDXT_SNO_1"/>
    <property type="match status" value="1"/>
</dbReference>
<dbReference type="PROSITE" id="PS51130">
    <property type="entry name" value="PDXT_SNO_2"/>
    <property type="match status" value="1"/>
</dbReference>
<keyword id="KW-0315">Glutamine amidotransferase</keyword>
<keyword id="KW-0378">Hydrolase</keyword>
<keyword id="KW-0456">Lyase</keyword>
<keyword id="KW-0663">Pyridoxal phosphate</keyword>
<evidence type="ECO:0000255" key="1">
    <source>
        <dbReference type="HAMAP-Rule" id="MF_01615"/>
    </source>
</evidence>
<feature type="chain" id="PRO_1000185898" description="Pyridoxal 5'-phosphate synthase subunit PdxT">
    <location>
        <begin position="1"/>
        <end position="202"/>
    </location>
</feature>
<feature type="active site" description="Nucleophile" evidence="1">
    <location>
        <position position="81"/>
    </location>
</feature>
<feature type="active site" description="Charge relay system" evidence="1">
    <location>
        <position position="182"/>
    </location>
</feature>
<feature type="active site" description="Charge relay system" evidence="1">
    <location>
        <position position="184"/>
    </location>
</feature>
<feature type="binding site" evidence="1">
    <location>
        <begin position="49"/>
        <end position="51"/>
    </location>
    <ligand>
        <name>L-glutamine</name>
        <dbReference type="ChEBI" id="CHEBI:58359"/>
    </ligand>
</feature>
<feature type="binding site" evidence="1">
    <location>
        <position position="110"/>
    </location>
    <ligand>
        <name>L-glutamine</name>
        <dbReference type="ChEBI" id="CHEBI:58359"/>
    </ligand>
</feature>
<feature type="binding site" evidence="1">
    <location>
        <begin position="139"/>
        <end position="140"/>
    </location>
    <ligand>
        <name>L-glutamine</name>
        <dbReference type="ChEBI" id="CHEBI:58359"/>
    </ligand>
</feature>
<organism>
    <name type="scientific">Rhodococcus opacus (strain B4)</name>
    <dbReference type="NCBI Taxonomy" id="632772"/>
    <lineage>
        <taxon>Bacteria</taxon>
        <taxon>Bacillati</taxon>
        <taxon>Actinomycetota</taxon>
        <taxon>Actinomycetes</taxon>
        <taxon>Mycobacteriales</taxon>
        <taxon>Nocardiaceae</taxon>
        <taxon>Rhodococcus</taxon>
    </lineage>
</organism>
<gene>
    <name evidence="1" type="primary">pdxT</name>
    <name type="ordered locus">ROP_68670</name>
</gene>
<sequence length="202" mass="21802">MTRPLVGVLALQGDVREHLAALNDSGADAVGIRRPEELEKIDGLVIPGGESTTMSKLLQIFELLEPLKARLRDGLPAYGSCAGMILLASEILDTRPDAQHLGAIDMTVRRNAFGRQVDSFESDLEFEGIVGDPMRAVFIRAPWVERVGDDVQILARVPESGGAAAGRIVAVRQGSVVATSFHPEVTGDRRVHELFVDIVRGV</sequence>
<proteinExistence type="inferred from homology"/>
<name>PDXT_RHOOB</name>
<reference key="1">
    <citation type="submission" date="2009-03" db="EMBL/GenBank/DDBJ databases">
        <title>Comparison of the complete genome sequences of Rhodococcus erythropolis PR4 and Rhodococcus opacus B4.</title>
        <authorList>
            <person name="Takarada H."/>
            <person name="Sekine M."/>
            <person name="Hosoyama A."/>
            <person name="Yamada R."/>
            <person name="Fujisawa T."/>
            <person name="Omata S."/>
            <person name="Shimizu A."/>
            <person name="Tsukatani N."/>
            <person name="Tanikawa S."/>
            <person name="Fujita N."/>
            <person name="Harayama S."/>
        </authorList>
    </citation>
    <scope>NUCLEOTIDE SEQUENCE [LARGE SCALE GENOMIC DNA]</scope>
    <source>
        <strain>B4</strain>
    </source>
</reference>
<comment type="function">
    <text evidence="1">Catalyzes the hydrolysis of glutamine to glutamate and ammonia as part of the biosynthesis of pyridoxal 5'-phosphate. The resulting ammonia molecule is channeled to the active site of PdxS.</text>
</comment>
<comment type="catalytic activity">
    <reaction evidence="1">
        <text>aldehydo-D-ribose 5-phosphate + D-glyceraldehyde 3-phosphate + L-glutamine = pyridoxal 5'-phosphate + L-glutamate + phosphate + 3 H2O + H(+)</text>
        <dbReference type="Rhea" id="RHEA:31507"/>
        <dbReference type="ChEBI" id="CHEBI:15377"/>
        <dbReference type="ChEBI" id="CHEBI:15378"/>
        <dbReference type="ChEBI" id="CHEBI:29985"/>
        <dbReference type="ChEBI" id="CHEBI:43474"/>
        <dbReference type="ChEBI" id="CHEBI:58273"/>
        <dbReference type="ChEBI" id="CHEBI:58359"/>
        <dbReference type="ChEBI" id="CHEBI:59776"/>
        <dbReference type="ChEBI" id="CHEBI:597326"/>
        <dbReference type="EC" id="4.3.3.6"/>
    </reaction>
</comment>
<comment type="catalytic activity">
    <reaction evidence="1">
        <text>L-glutamine + H2O = L-glutamate + NH4(+)</text>
        <dbReference type="Rhea" id="RHEA:15889"/>
        <dbReference type="ChEBI" id="CHEBI:15377"/>
        <dbReference type="ChEBI" id="CHEBI:28938"/>
        <dbReference type="ChEBI" id="CHEBI:29985"/>
        <dbReference type="ChEBI" id="CHEBI:58359"/>
        <dbReference type="EC" id="3.5.1.2"/>
    </reaction>
</comment>
<comment type="pathway">
    <text evidence="1">Cofactor biosynthesis; pyridoxal 5'-phosphate biosynthesis.</text>
</comment>
<comment type="subunit">
    <text evidence="1">In the presence of PdxS, forms a dodecamer of heterodimers. Only shows activity in the heterodimer.</text>
</comment>
<comment type="similarity">
    <text evidence="1">Belongs to the glutaminase PdxT/SNO family.</text>
</comment>
<accession>C1B4C5</accession>